<reference key="1">
    <citation type="journal article" date="2002" name="Proc. Natl. Acad. Sci. U.S.A.">
        <title>Extensive mosaic structure revealed by the complete genome sequence of uropathogenic Escherichia coli.</title>
        <authorList>
            <person name="Welch R.A."/>
            <person name="Burland V."/>
            <person name="Plunkett G. III"/>
            <person name="Redford P."/>
            <person name="Roesch P."/>
            <person name="Rasko D."/>
            <person name="Buckles E.L."/>
            <person name="Liou S.-R."/>
            <person name="Boutin A."/>
            <person name="Hackett J."/>
            <person name="Stroud D."/>
            <person name="Mayhew G.F."/>
            <person name="Rose D.J."/>
            <person name="Zhou S."/>
            <person name="Schwartz D.C."/>
            <person name="Perna N.T."/>
            <person name="Mobley H.L.T."/>
            <person name="Donnenberg M.S."/>
            <person name="Blattner F.R."/>
        </authorList>
    </citation>
    <scope>NUCLEOTIDE SEQUENCE [LARGE SCALE GENOMIC DNA]</scope>
    <source>
        <strain>CFT073 / ATCC 700928 / UPEC</strain>
    </source>
</reference>
<evidence type="ECO:0000255" key="1">
    <source>
        <dbReference type="HAMAP-Rule" id="MF_00170"/>
    </source>
</evidence>
<evidence type="ECO:0000305" key="2"/>
<name>RPIA_ECOL6</name>
<feature type="chain" id="PRO_0000158414" description="Ribose-5-phosphate isomerase A">
    <location>
        <begin position="1"/>
        <end position="219"/>
    </location>
</feature>
<feature type="active site" description="Proton acceptor" evidence="1">
    <location>
        <position position="103"/>
    </location>
</feature>
<feature type="binding site" evidence="1">
    <location>
        <begin position="28"/>
        <end position="31"/>
    </location>
    <ligand>
        <name>substrate</name>
    </ligand>
</feature>
<feature type="binding site" evidence="1">
    <location>
        <begin position="81"/>
        <end position="84"/>
    </location>
    <ligand>
        <name>substrate</name>
    </ligand>
</feature>
<feature type="binding site" evidence="1">
    <location>
        <begin position="94"/>
        <end position="97"/>
    </location>
    <ligand>
        <name>substrate</name>
    </ligand>
</feature>
<feature type="binding site" evidence="1">
    <location>
        <position position="121"/>
    </location>
    <ligand>
        <name>substrate</name>
    </ligand>
</feature>
<keyword id="KW-0413">Isomerase</keyword>
<keyword id="KW-1185">Reference proteome</keyword>
<accession>P0A7Z1</accession>
<accession>P27252</accession>
<organism>
    <name type="scientific">Escherichia coli O6:H1 (strain CFT073 / ATCC 700928 / UPEC)</name>
    <dbReference type="NCBI Taxonomy" id="199310"/>
    <lineage>
        <taxon>Bacteria</taxon>
        <taxon>Pseudomonadati</taxon>
        <taxon>Pseudomonadota</taxon>
        <taxon>Gammaproteobacteria</taxon>
        <taxon>Enterobacterales</taxon>
        <taxon>Enterobacteriaceae</taxon>
        <taxon>Escherichia</taxon>
    </lineage>
</organism>
<gene>
    <name evidence="1" type="primary">rpiA</name>
    <name type="ordered locus">c3495</name>
</gene>
<comment type="function">
    <text evidence="1">Catalyzes the reversible conversion of ribose-5-phosphate to ribulose 5-phosphate.</text>
</comment>
<comment type="catalytic activity">
    <reaction evidence="1">
        <text>aldehydo-D-ribose 5-phosphate = D-ribulose 5-phosphate</text>
        <dbReference type="Rhea" id="RHEA:14657"/>
        <dbReference type="ChEBI" id="CHEBI:58121"/>
        <dbReference type="ChEBI" id="CHEBI:58273"/>
        <dbReference type="EC" id="5.3.1.6"/>
    </reaction>
</comment>
<comment type="pathway">
    <text evidence="1">Carbohydrate degradation; pentose phosphate pathway; D-ribose 5-phosphate from D-ribulose 5-phosphate (non-oxidative stage): step 1/1.</text>
</comment>
<comment type="subunit">
    <text evidence="1">Homodimer.</text>
</comment>
<comment type="similarity">
    <text evidence="1">Belongs to the ribose 5-phosphate isomerase family.</text>
</comment>
<comment type="sequence caution" evidence="2">
    <conflict type="erroneous initiation">
        <sequence resource="EMBL-CDS" id="AAN81943"/>
    </conflict>
</comment>
<dbReference type="EC" id="5.3.1.6" evidence="1"/>
<dbReference type="EMBL" id="AE014075">
    <property type="protein sequence ID" value="AAN81943.1"/>
    <property type="status" value="ALT_INIT"/>
    <property type="molecule type" value="Genomic_DNA"/>
</dbReference>
<dbReference type="RefSeq" id="WP_000189743.1">
    <property type="nucleotide sequence ID" value="NZ_CP051263.1"/>
</dbReference>
<dbReference type="SMR" id="P0A7Z1"/>
<dbReference type="STRING" id="199310.c3495"/>
<dbReference type="GeneID" id="93779085"/>
<dbReference type="KEGG" id="ecc:c3495"/>
<dbReference type="eggNOG" id="COG0120">
    <property type="taxonomic scope" value="Bacteria"/>
</dbReference>
<dbReference type="HOGENOM" id="CLU_056590_1_1_6"/>
<dbReference type="UniPathway" id="UPA00115">
    <property type="reaction ID" value="UER00412"/>
</dbReference>
<dbReference type="Proteomes" id="UP000001410">
    <property type="component" value="Chromosome"/>
</dbReference>
<dbReference type="GO" id="GO:0005829">
    <property type="term" value="C:cytosol"/>
    <property type="evidence" value="ECO:0007669"/>
    <property type="project" value="TreeGrafter"/>
</dbReference>
<dbReference type="GO" id="GO:0004751">
    <property type="term" value="F:ribose-5-phosphate isomerase activity"/>
    <property type="evidence" value="ECO:0007669"/>
    <property type="project" value="UniProtKB-UniRule"/>
</dbReference>
<dbReference type="GO" id="GO:0006014">
    <property type="term" value="P:D-ribose metabolic process"/>
    <property type="evidence" value="ECO:0007669"/>
    <property type="project" value="TreeGrafter"/>
</dbReference>
<dbReference type="GO" id="GO:0009052">
    <property type="term" value="P:pentose-phosphate shunt, non-oxidative branch"/>
    <property type="evidence" value="ECO:0007669"/>
    <property type="project" value="UniProtKB-UniRule"/>
</dbReference>
<dbReference type="CDD" id="cd01398">
    <property type="entry name" value="RPI_A"/>
    <property type="match status" value="1"/>
</dbReference>
<dbReference type="FunFam" id="3.30.70.260:FF:000004">
    <property type="entry name" value="Ribose-5-phosphate isomerase A"/>
    <property type="match status" value="1"/>
</dbReference>
<dbReference type="FunFam" id="3.40.50.1360:FF:000001">
    <property type="entry name" value="Ribose-5-phosphate isomerase A"/>
    <property type="match status" value="1"/>
</dbReference>
<dbReference type="Gene3D" id="3.30.70.260">
    <property type="match status" value="1"/>
</dbReference>
<dbReference type="Gene3D" id="3.40.50.1360">
    <property type="match status" value="1"/>
</dbReference>
<dbReference type="HAMAP" id="MF_00170">
    <property type="entry name" value="Rib_5P_isom_A"/>
    <property type="match status" value="1"/>
</dbReference>
<dbReference type="InterPro" id="IPR037171">
    <property type="entry name" value="NagB/RpiA_transferase-like"/>
</dbReference>
<dbReference type="InterPro" id="IPR020672">
    <property type="entry name" value="Ribose5P_isomerase_typA_subgr"/>
</dbReference>
<dbReference type="InterPro" id="IPR004788">
    <property type="entry name" value="Ribose5P_isomerase_type_A"/>
</dbReference>
<dbReference type="NCBIfam" id="NF001924">
    <property type="entry name" value="PRK00702.1"/>
    <property type="match status" value="1"/>
</dbReference>
<dbReference type="NCBIfam" id="TIGR00021">
    <property type="entry name" value="rpiA"/>
    <property type="match status" value="1"/>
</dbReference>
<dbReference type="PANTHER" id="PTHR11934">
    <property type="entry name" value="RIBOSE-5-PHOSPHATE ISOMERASE"/>
    <property type="match status" value="1"/>
</dbReference>
<dbReference type="PANTHER" id="PTHR11934:SF0">
    <property type="entry name" value="RIBOSE-5-PHOSPHATE ISOMERASE"/>
    <property type="match status" value="1"/>
</dbReference>
<dbReference type="Pfam" id="PF06026">
    <property type="entry name" value="Rib_5-P_isom_A"/>
    <property type="match status" value="1"/>
</dbReference>
<dbReference type="SUPFAM" id="SSF75445">
    <property type="entry name" value="D-ribose-5-phosphate isomerase (RpiA), lid domain"/>
    <property type="match status" value="1"/>
</dbReference>
<dbReference type="SUPFAM" id="SSF100950">
    <property type="entry name" value="NagB/RpiA/CoA transferase-like"/>
    <property type="match status" value="1"/>
</dbReference>
<sequence length="219" mass="22860">MTQDELKKAVGWAALQYVQPGTIVGVGTGSTAAHFIDALGTMKGQIEGAVSSSDASTEKLKSLGIHVFDLNEVDSLGIYVDGADEINGHMQMIKGGGAALTREKIIASVAEKFICIADASKQVDILGKFPLPVEVIPMARSAVARQLVKLGGRPEYRQGVVTDNGNVILDVHGMEILDPIAMENAINAIPGVVTVGLFANRGADVALIGTPDGVKTIVK</sequence>
<proteinExistence type="inferred from homology"/>
<protein>
    <recommendedName>
        <fullName evidence="1">Ribose-5-phosphate isomerase A</fullName>
        <ecNumber evidence="1">5.3.1.6</ecNumber>
    </recommendedName>
    <alternativeName>
        <fullName evidence="1">Phosphoriboisomerase A</fullName>
        <shortName evidence="1">PRI</shortName>
    </alternativeName>
</protein>